<feature type="chain" id="PRO_0000406302" description="Antitoxin MazE8">
    <location>
        <begin position="1"/>
        <end position="82"/>
    </location>
</feature>
<protein>
    <recommendedName>
        <fullName evidence="2">Antitoxin MazE8</fullName>
    </recommendedName>
</protein>
<proteinExistence type="inferred from homology"/>
<gene>
    <name type="primary">mazE8</name>
    <name type="ordered locus">Rv2274A</name>
</gene>
<dbReference type="EMBL" id="AL123456">
    <property type="protein sequence ID" value="CCP45056.1"/>
    <property type="molecule type" value="Genomic_DNA"/>
</dbReference>
<dbReference type="RefSeq" id="WP_003903832.1">
    <property type="nucleotide sequence ID" value="NZ_NVQJ01000008.1"/>
</dbReference>
<dbReference type="RefSeq" id="YP_007410963.1">
    <property type="nucleotide sequence ID" value="NC_000962.3"/>
</dbReference>
<dbReference type="STRING" id="83332.Rv2274A"/>
<dbReference type="PaxDb" id="83332-Rv2274A"/>
<dbReference type="GeneID" id="14515891"/>
<dbReference type="GeneID" id="69102942"/>
<dbReference type="KEGG" id="mtu:Rv2274A"/>
<dbReference type="KEGG" id="mtv:RVBD_2274A"/>
<dbReference type="TubercuList" id="Rv2274A"/>
<dbReference type="InParanoid" id="P0CL60"/>
<dbReference type="Proteomes" id="UP000001584">
    <property type="component" value="Chromosome"/>
</dbReference>
<accession>P0CL60</accession>
<accession>L0TC12</accession>
<reference key="1">
    <citation type="journal article" date="1998" name="Nature">
        <title>Deciphering the biology of Mycobacterium tuberculosis from the complete genome sequence.</title>
        <authorList>
            <person name="Cole S.T."/>
            <person name="Brosch R."/>
            <person name="Parkhill J."/>
            <person name="Garnier T."/>
            <person name="Churcher C.M."/>
            <person name="Harris D.E."/>
            <person name="Gordon S.V."/>
            <person name="Eiglmeier K."/>
            <person name="Gas S."/>
            <person name="Barry C.E. III"/>
            <person name="Tekaia F."/>
            <person name="Badcock K."/>
            <person name="Basham D."/>
            <person name="Brown D."/>
            <person name="Chillingworth T."/>
            <person name="Connor R."/>
            <person name="Davies R.M."/>
            <person name="Devlin K."/>
            <person name="Feltwell T."/>
            <person name="Gentles S."/>
            <person name="Hamlin N."/>
            <person name="Holroyd S."/>
            <person name="Hornsby T."/>
            <person name="Jagels K."/>
            <person name="Krogh A."/>
            <person name="McLean J."/>
            <person name="Moule S."/>
            <person name="Murphy L.D."/>
            <person name="Oliver S."/>
            <person name="Osborne J."/>
            <person name="Quail M.A."/>
            <person name="Rajandream M.A."/>
            <person name="Rogers J."/>
            <person name="Rutter S."/>
            <person name="Seeger K."/>
            <person name="Skelton S."/>
            <person name="Squares S."/>
            <person name="Squares R."/>
            <person name="Sulston J.E."/>
            <person name="Taylor K."/>
            <person name="Whitehead S."/>
            <person name="Barrell B.G."/>
        </authorList>
    </citation>
    <scope>NUCLEOTIDE SEQUENCE [LARGE SCALE GENOMIC DNA]</scope>
    <source>
        <strain>ATCC 25618 / H37Rv</strain>
    </source>
</reference>
<reference key="2">
    <citation type="journal article" date="2005" name="Nucleic Acids Res.">
        <title>Toxin-antitoxin loci are highly abundant in free-living but lost from host-associated prokaryotes.</title>
        <authorList>
            <person name="Pandey D.P."/>
            <person name="Gerdes K."/>
        </authorList>
    </citation>
    <scope>IDENTIFICATION</scope>
    <scope>POSSIBLE FUNCTION</scope>
    <source>
        <strain>ATCC 25618 / H37Rv</strain>
    </source>
</reference>
<name>MAZE8_MYCTU</name>
<evidence type="ECO:0000250" key="1">
    <source>
        <dbReference type="UniProtKB" id="O53451"/>
    </source>
</evidence>
<evidence type="ECO:0000305" key="2"/>
<sequence>MAEPETLPGRWLPECACLAETVSWEQSRLWSRLLCRPHFRHALPGLTGGSASRPSARSARLVRQPRMTLFSLDHRDGVDARC</sequence>
<keyword id="KW-1185">Reference proteome</keyword>
<keyword id="KW-1277">Toxin-antitoxin system</keyword>
<organism>
    <name type="scientific">Mycobacterium tuberculosis (strain ATCC 25618 / H37Rv)</name>
    <dbReference type="NCBI Taxonomy" id="83332"/>
    <lineage>
        <taxon>Bacteria</taxon>
        <taxon>Bacillati</taxon>
        <taxon>Actinomycetota</taxon>
        <taxon>Actinomycetes</taxon>
        <taxon>Mycobacteriales</taxon>
        <taxon>Mycobacteriaceae</taxon>
        <taxon>Mycobacterium</taxon>
        <taxon>Mycobacterium tuberculosis complex</taxon>
    </lineage>
</organism>
<comment type="function">
    <text>Antitoxin component of a type II toxin-antitoxin (TA) system. Its cognate toxin is MazF8.</text>
</comment>
<comment type="subunit">
    <text evidence="1">Forms a complex with cognate toxin MazF8.</text>
</comment>